<proteinExistence type="evidence at transcript level"/>
<evidence type="ECO:0000250" key="1"/>
<evidence type="ECO:0000250" key="2">
    <source>
        <dbReference type="UniProtKB" id="Q9BVM4"/>
    </source>
</evidence>
<evidence type="ECO:0000305" key="3"/>
<gene>
    <name type="primary">ggact.1</name>
    <name type="ORF">zgc:154024</name>
</gene>
<keyword id="KW-0456">Lyase</keyword>
<keyword id="KW-1185">Reference proteome</keyword>
<comment type="function">
    <text evidence="2">May contribute to degradation of proteins cross-linked by transglutaminases by degrading the cross-link between a lysine and a glutamic acid residue. Catalyzes the formation of 5-oxo-L-proline from L-gamma-glutamyl-L-epsilon-lysine.</text>
</comment>
<comment type="catalytic activity">
    <reaction evidence="2">
        <text>epsilon-(gamma-L-glutamyl)-L-lysine = 5-oxo-L-proline + L-lysine</text>
        <dbReference type="Rhea" id="RHEA:16961"/>
        <dbReference type="ChEBI" id="CHEBI:32551"/>
        <dbReference type="ChEBI" id="CHEBI:58402"/>
        <dbReference type="ChEBI" id="CHEBI:133752"/>
        <dbReference type="EC" id="4.3.2.8"/>
    </reaction>
</comment>
<comment type="similarity">
    <text evidence="3">Belongs to the gamma-glutamylcyclotransferase family.</text>
</comment>
<accession>A0JMM9</accession>
<protein>
    <recommendedName>
        <fullName>Gamma-glutamylaminecyclotransferase A</fullName>
        <shortName>GGACT A</shortName>
        <ecNumber evidence="2">4.3.2.8</ecNumber>
    </recommendedName>
    <alternativeName>
        <fullName>AIG2-like domain-containing protein 1-A</fullName>
    </alternativeName>
    <alternativeName>
        <fullName>Gamma-glutamylamine cyclotransferase A</fullName>
    </alternativeName>
    <alternativeName>
        <fullName>Gamma-glutamylamine cyclotransferase, tandem duplicate 1</fullName>
    </alternativeName>
</protein>
<name>GGACA_DANRE</name>
<organism>
    <name type="scientific">Danio rerio</name>
    <name type="common">Zebrafish</name>
    <name type="synonym">Brachydanio rerio</name>
    <dbReference type="NCBI Taxonomy" id="7955"/>
    <lineage>
        <taxon>Eukaryota</taxon>
        <taxon>Metazoa</taxon>
        <taxon>Chordata</taxon>
        <taxon>Craniata</taxon>
        <taxon>Vertebrata</taxon>
        <taxon>Euteleostomi</taxon>
        <taxon>Actinopterygii</taxon>
        <taxon>Neopterygii</taxon>
        <taxon>Teleostei</taxon>
        <taxon>Ostariophysi</taxon>
        <taxon>Cypriniformes</taxon>
        <taxon>Danionidae</taxon>
        <taxon>Danioninae</taxon>
        <taxon>Danio</taxon>
    </lineage>
</organism>
<dbReference type="EC" id="4.3.2.8" evidence="2"/>
<dbReference type="EMBL" id="BC125938">
    <property type="protein sequence ID" value="AAI25939.1"/>
    <property type="molecule type" value="mRNA"/>
</dbReference>
<dbReference type="RefSeq" id="NP_001071185.1">
    <property type="nucleotide sequence ID" value="NM_001077717.1"/>
</dbReference>
<dbReference type="SMR" id="A0JMM9"/>
<dbReference type="FunCoup" id="A0JMM9">
    <property type="interactions" value="372"/>
</dbReference>
<dbReference type="STRING" id="7955.ENSDARP00000094571"/>
<dbReference type="PaxDb" id="7955-ENSDARP00000094571"/>
<dbReference type="GeneID" id="777609"/>
<dbReference type="KEGG" id="dre:777609"/>
<dbReference type="AGR" id="ZFIN:ZDB-GENE-061103-94"/>
<dbReference type="CTD" id="777609"/>
<dbReference type="ZFIN" id="ZDB-GENE-061103-94">
    <property type="gene designation" value="ggact.1"/>
</dbReference>
<dbReference type="eggNOG" id="KOG4450">
    <property type="taxonomic scope" value="Eukaryota"/>
</dbReference>
<dbReference type="InParanoid" id="A0JMM9"/>
<dbReference type="OrthoDB" id="113620at2759"/>
<dbReference type="PhylomeDB" id="A0JMM9"/>
<dbReference type="PRO" id="PR:A0JMM9"/>
<dbReference type="Proteomes" id="UP000000437">
    <property type="component" value="Chromosome 1"/>
</dbReference>
<dbReference type="GO" id="GO:0005829">
    <property type="term" value="C:cytosol"/>
    <property type="evidence" value="ECO:0000318"/>
    <property type="project" value="GO_Central"/>
</dbReference>
<dbReference type="GO" id="GO:0061929">
    <property type="term" value="F:gamma-glutamylaminecyclotransferase activity"/>
    <property type="evidence" value="ECO:0000250"/>
    <property type="project" value="UniProtKB"/>
</dbReference>
<dbReference type="GO" id="GO:0042219">
    <property type="term" value="P:modified amino acid catabolic process"/>
    <property type="evidence" value="ECO:0000250"/>
    <property type="project" value="UniProtKB"/>
</dbReference>
<dbReference type="CDD" id="cd06661">
    <property type="entry name" value="GGCT_like"/>
    <property type="match status" value="1"/>
</dbReference>
<dbReference type="FunFam" id="3.10.490.10:FF:000008">
    <property type="entry name" value="Gamma-glutamylaminecyclotransferase A"/>
    <property type="match status" value="1"/>
</dbReference>
<dbReference type="Gene3D" id="3.10.490.10">
    <property type="entry name" value="Gamma-glutamyl cyclotransferase-like"/>
    <property type="match status" value="1"/>
</dbReference>
<dbReference type="InterPro" id="IPR009288">
    <property type="entry name" value="AIG2-like_dom"/>
</dbReference>
<dbReference type="InterPro" id="IPR039126">
    <property type="entry name" value="GGACT"/>
</dbReference>
<dbReference type="InterPro" id="IPR013024">
    <property type="entry name" value="GGCT-like"/>
</dbReference>
<dbReference type="InterPro" id="IPR036568">
    <property type="entry name" value="GGCT-like_sf"/>
</dbReference>
<dbReference type="PANTHER" id="PTHR12510:SF4">
    <property type="entry name" value="GAMMA-GLUTAMYLAMINECYCLOTRANSFERASE"/>
    <property type="match status" value="1"/>
</dbReference>
<dbReference type="PANTHER" id="PTHR12510">
    <property type="entry name" value="TROPONIN C-AKIN-1 PROTEIN"/>
    <property type="match status" value="1"/>
</dbReference>
<dbReference type="Pfam" id="PF06094">
    <property type="entry name" value="GGACT"/>
    <property type="match status" value="1"/>
</dbReference>
<dbReference type="SUPFAM" id="SSF110857">
    <property type="entry name" value="Gamma-glutamyl cyclotransferase-like"/>
    <property type="match status" value="1"/>
</dbReference>
<feature type="chain" id="PRO_0000320208" description="Gamma-glutamylaminecyclotransferase A">
    <location>
        <begin position="1"/>
        <end position="161"/>
    </location>
</feature>
<feature type="active site" description="Proton acceptor" evidence="1">
    <location>
        <position position="101"/>
    </location>
</feature>
<feature type="binding site" evidence="1">
    <location>
        <begin position="26"/>
        <end position="29"/>
    </location>
    <ligand>
        <name>substrate</name>
    </ligand>
</feature>
<reference key="1">
    <citation type="submission" date="2006-10" db="EMBL/GenBank/DDBJ databases">
        <authorList>
            <consortium name="NIH - Zebrafish Gene Collection (ZGC) project"/>
        </authorList>
    </citation>
    <scope>NUCLEOTIDE SEQUENCE [LARGE SCALE MRNA]</scope>
</reference>
<sequence length="161" mass="18132">MIAIHILLLVFSNIVLPALCINVFVYGTLKKGQSNYHELTNTTHGQAEFITCARTKDPYPMVIATKDKFPFLLNVPGSGQQVYGEIYNVDQNMLDFLDEFEECPDLYQRTSIQLKILKGNGDSEEAFVYSTSTFDPDWLNKPTFSVYDATGDPGNNCVSRE</sequence>